<reference key="1">
    <citation type="journal article" date="2005" name="Nature">
        <title>Genomic sequence of the pathogenic and allergenic filamentous fungus Aspergillus fumigatus.</title>
        <authorList>
            <person name="Nierman W.C."/>
            <person name="Pain A."/>
            <person name="Anderson M.J."/>
            <person name="Wortman J.R."/>
            <person name="Kim H.S."/>
            <person name="Arroyo J."/>
            <person name="Berriman M."/>
            <person name="Abe K."/>
            <person name="Archer D.B."/>
            <person name="Bermejo C."/>
            <person name="Bennett J.W."/>
            <person name="Bowyer P."/>
            <person name="Chen D."/>
            <person name="Collins M."/>
            <person name="Coulsen R."/>
            <person name="Davies R."/>
            <person name="Dyer P.S."/>
            <person name="Farman M.L."/>
            <person name="Fedorova N."/>
            <person name="Fedorova N.D."/>
            <person name="Feldblyum T.V."/>
            <person name="Fischer R."/>
            <person name="Fosker N."/>
            <person name="Fraser A."/>
            <person name="Garcia J.L."/>
            <person name="Garcia M.J."/>
            <person name="Goble A."/>
            <person name="Goldman G.H."/>
            <person name="Gomi K."/>
            <person name="Griffith-Jones S."/>
            <person name="Gwilliam R."/>
            <person name="Haas B.J."/>
            <person name="Haas H."/>
            <person name="Harris D.E."/>
            <person name="Horiuchi H."/>
            <person name="Huang J."/>
            <person name="Humphray S."/>
            <person name="Jimenez J."/>
            <person name="Keller N."/>
            <person name="Khouri H."/>
            <person name="Kitamoto K."/>
            <person name="Kobayashi T."/>
            <person name="Konzack S."/>
            <person name="Kulkarni R."/>
            <person name="Kumagai T."/>
            <person name="Lafton A."/>
            <person name="Latge J.-P."/>
            <person name="Li W."/>
            <person name="Lord A."/>
            <person name="Lu C."/>
            <person name="Majoros W.H."/>
            <person name="May G.S."/>
            <person name="Miller B.L."/>
            <person name="Mohamoud Y."/>
            <person name="Molina M."/>
            <person name="Monod M."/>
            <person name="Mouyna I."/>
            <person name="Mulligan S."/>
            <person name="Murphy L.D."/>
            <person name="O'Neil S."/>
            <person name="Paulsen I."/>
            <person name="Penalva M.A."/>
            <person name="Pertea M."/>
            <person name="Price C."/>
            <person name="Pritchard B.L."/>
            <person name="Quail M.A."/>
            <person name="Rabbinowitsch E."/>
            <person name="Rawlins N."/>
            <person name="Rajandream M.A."/>
            <person name="Reichard U."/>
            <person name="Renauld H."/>
            <person name="Robson G.D."/>
            <person name="Rodriguez de Cordoba S."/>
            <person name="Rodriguez-Pena J.M."/>
            <person name="Ronning C.M."/>
            <person name="Rutter S."/>
            <person name="Salzberg S.L."/>
            <person name="Sanchez M."/>
            <person name="Sanchez-Ferrero J.C."/>
            <person name="Saunders D."/>
            <person name="Seeger K."/>
            <person name="Squares R."/>
            <person name="Squares S."/>
            <person name="Takeuchi M."/>
            <person name="Tekaia F."/>
            <person name="Turner G."/>
            <person name="Vazquez de Aldana C.R."/>
            <person name="Weidman J."/>
            <person name="White O."/>
            <person name="Woodward J.R."/>
            <person name="Yu J.-H."/>
            <person name="Fraser C.M."/>
            <person name="Galagan J.E."/>
            <person name="Asai K."/>
            <person name="Machida M."/>
            <person name="Hall N."/>
            <person name="Barrell B.G."/>
            <person name="Denning D.W."/>
        </authorList>
    </citation>
    <scope>NUCLEOTIDE SEQUENCE [LARGE SCALE GENOMIC DNA]</scope>
    <source>
        <strain>ATCC MYA-4609 / CBS 101355 / FGSC A1100 / Af293</strain>
    </source>
</reference>
<reference key="2">
    <citation type="journal article" date="2007" name="PLoS Pathog.">
        <title>Transcriptional regulation of chemical diversity in Aspergillus fumigatus by LaeA.</title>
        <authorList>
            <person name="Perrin R.M."/>
            <person name="Fedorova N.D."/>
            <person name="Bok J.W."/>
            <person name="Cramer R.A."/>
            <person name="Wortman J.R."/>
            <person name="Kim H.S."/>
            <person name="Nierman W.C."/>
            <person name="Keller N.P."/>
        </authorList>
    </citation>
    <scope>INDUCTION</scope>
</reference>
<reference key="3">
    <citation type="journal article" date="2009" name="J. Am. Chem. Soc.">
        <title>Biosynthesis of steroidal antibiotic fusidanes: functional analysis of oxidosqualene cyclase and subsequent tailoring enzymes from Aspergillus fumigatus.</title>
        <authorList>
            <person name="Mitsuguchi H."/>
            <person name="Seshime Y."/>
            <person name="Fujii I."/>
            <person name="Shibuya M."/>
            <person name="Ebizuka Y."/>
            <person name="Kushiro T."/>
        </authorList>
    </citation>
    <scope>FUNCTION</scope>
    <scope>PATHWAY</scope>
</reference>
<reference key="4">
    <citation type="journal article" date="2009" name="Org. Lett.">
        <title>Protostadienol biosynthesis and metabolism in the pathogenic fungus Aspergillus fumigatus.</title>
        <authorList>
            <person name="Lodeiro S."/>
            <person name="Xiong Q."/>
            <person name="Wilson W.K."/>
            <person name="Ivanova Y."/>
            <person name="Smith M.L."/>
            <person name="May G.S."/>
            <person name="Matsuda S.P."/>
        </authorList>
    </citation>
    <scope>FUNCTION</scope>
</reference>
<reference key="5">
    <citation type="journal article" date="2017" name="Nat. Commun.">
        <title>Biosynthesis of helvolic acid and identification of an unusual C-4-demethylation process distinct from sterol biosynthesis.</title>
        <authorList>
            <person name="Lv J.M."/>
            <person name="Hu D."/>
            <person name="Gao H."/>
            <person name="Kushiro T."/>
            <person name="Awakawa T."/>
            <person name="Chen G.D."/>
            <person name="Wang C.X."/>
            <person name="Abe I."/>
            <person name="Yao X.S."/>
        </authorList>
    </citation>
    <scope>FUNCTION</scope>
    <scope>CATALYTIC ACTIVITY</scope>
    <scope>PATHWAY</scope>
</reference>
<name>HELB3_ASPFU</name>
<dbReference type="EC" id="1.-.-.-" evidence="6 7"/>
<dbReference type="EMBL" id="AAHF01000005">
    <property type="protein sequence ID" value="EAL89314.2"/>
    <property type="molecule type" value="Genomic_DNA"/>
</dbReference>
<dbReference type="RefSeq" id="XP_751352.2">
    <property type="nucleotide sequence ID" value="XM_746259.2"/>
</dbReference>
<dbReference type="SMR" id="Q4WR20"/>
<dbReference type="STRING" id="330879.Q4WR20"/>
<dbReference type="GlyCosmos" id="Q4WR20">
    <property type="glycosylation" value="3 sites, No reported glycans"/>
</dbReference>
<dbReference type="EnsemblFungi" id="EAL89314">
    <property type="protein sequence ID" value="EAL89314"/>
    <property type="gene ID" value="AFUA_4G14810"/>
</dbReference>
<dbReference type="GeneID" id="3508870"/>
<dbReference type="KEGG" id="afm:AFUA_4G14810"/>
<dbReference type="VEuPathDB" id="FungiDB:Afu4g14810"/>
<dbReference type="eggNOG" id="KOG0158">
    <property type="taxonomic scope" value="Eukaryota"/>
</dbReference>
<dbReference type="HOGENOM" id="CLU_001570_14_2_1"/>
<dbReference type="InParanoid" id="Q4WR20"/>
<dbReference type="OMA" id="HETRRNM"/>
<dbReference type="OrthoDB" id="655030at2759"/>
<dbReference type="Proteomes" id="UP000002530">
    <property type="component" value="Chromosome 4"/>
</dbReference>
<dbReference type="GO" id="GO:0020037">
    <property type="term" value="F:heme binding"/>
    <property type="evidence" value="ECO:0007669"/>
    <property type="project" value="InterPro"/>
</dbReference>
<dbReference type="GO" id="GO:0005506">
    <property type="term" value="F:iron ion binding"/>
    <property type="evidence" value="ECO:0007669"/>
    <property type="project" value="InterPro"/>
</dbReference>
<dbReference type="GO" id="GO:0004497">
    <property type="term" value="F:monooxygenase activity"/>
    <property type="evidence" value="ECO:0007669"/>
    <property type="project" value="UniProtKB-KW"/>
</dbReference>
<dbReference type="GO" id="GO:0016705">
    <property type="term" value="F:oxidoreductase activity, acting on paired donors, with incorporation or reduction of molecular oxygen"/>
    <property type="evidence" value="ECO:0007669"/>
    <property type="project" value="InterPro"/>
</dbReference>
<dbReference type="GO" id="GO:1900812">
    <property type="term" value="P:helvolic acid biosynthetic process"/>
    <property type="evidence" value="ECO:0000314"/>
    <property type="project" value="GO_Central"/>
</dbReference>
<dbReference type="GO" id="GO:0019748">
    <property type="term" value="P:secondary metabolic process"/>
    <property type="evidence" value="ECO:0000317"/>
    <property type="project" value="AspGD"/>
</dbReference>
<dbReference type="FunFam" id="1.10.630.10:FF:000075">
    <property type="entry name" value="Cytochrome P450 monooxygenase helB1"/>
    <property type="match status" value="1"/>
</dbReference>
<dbReference type="Gene3D" id="1.10.630.10">
    <property type="entry name" value="Cytochrome P450"/>
    <property type="match status" value="1"/>
</dbReference>
<dbReference type="InterPro" id="IPR001128">
    <property type="entry name" value="Cyt_P450"/>
</dbReference>
<dbReference type="InterPro" id="IPR002401">
    <property type="entry name" value="Cyt_P450_E_grp-I"/>
</dbReference>
<dbReference type="InterPro" id="IPR036396">
    <property type="entry name" value="Cyt_P450_sf"/>
</dbReference>
<dbReference type="InterPro" id="IPR050121">
    <property type="entry name" value="Cytochrome_P450_monoxygenase"/>
</dbReference>
<dbReference type="PANTHER" id="PTHR24305">
    <property type="entry name" value="CYTOCHROME P450"/>
    <property type="match status" value="1"/>
</dbReference>
<dbReference type="PANTHER" id="PTHR24305:SF235">
    <property type="entry name" value="CYTOCHROME P450 MONOOXYGENASE APDB-RELATED"/>
    <property type="match status" value="1"/>
</dbReference>
<dbReference type="Pfam" id="PF00067">
    <property type="entry name" value="p450"/>
    <property type="match status" value="1"/>
</dbReference>
<dbReference type="PRINTS" id="PR00463">
    <property type="entry name" value="EP450I"/>
</dbReference>
<dbReference type="PRINTS" id="PR00385">
    <property type="entry name" value="P450"/>
</dbReference>
<dbReference type="SUPFAM" id="SSF48264">
    <property type="entry name" value="Cytochrome P450"/>
    <property type="match status" value="1"/>
</dbReference>
<accession>Q4WR20</accession>
<proteinExistence type="evidence at protein level"/>
<protein>
    <recommendedName>
        <fullName evidence="9">Cytochrome P450 monooxygenase helB3</fullName>
        <ecNumber evidence="6 7">1.-.-.-</ecNumber>
    </recommendedName>
    <alternativeName>
        <fullName evidence="9">Helvolic acid biosynthesis cluster protein B3</fullName>
    </alternativeName>
</protein>
<gene>
    <name evidence="9" type="primary">helB3</name>
    <name evidence="8" type="synonym">cyp5081D1</name>
    <name type="ORF">AFUA_4G14810</name>
</gene>
<evidence type="ECO:0000250" key="1">
    <source>
        <dbReference type="UniProtKB" id="P04798"/>
    </source>
</evidence>
<evidence type="ECO:0000255" key="2"/>
<evidence type="ECO:0000255" key="3">
    <source>
        <dbReference type="PROSITE-ProRule" id="PRU00498"/>
    </source>
</evidence>
<evidence type="ECO:0000269" key="4">
    <source>
    </source>
</evidence>
<evidence type="ECO:0000269" key="5">
    <source>
    </source>
</evidence>
<evidence type="ECO:0000269" key="6">
    <source>
    </source>
</evidence>
<evidence type="ECO:0000269" key="7">
    <source>
    </source>
</evidence>
<evidence type="ECO:0000303" key="8">
    <source>
    </source>
</evidence>
<evidence type="ECO:0000303" key="9">
    <source>
    </source>
</evidence>
<evidence type="ECO:0000305" key="10">
    <source>
    </source>
</evidence>
<comment type="function">
    <text evidence="5 6 7">Cytochrome P450 monooxygenase; part of the gene cluster that mediates the biosynthesis of helvolic acid, an antibacterial nortriterpenoid (PubMed:19216560, PubMed:19415934, PubMed:29158519). Protostadienol synthase helA cyclizes (3S)-oxidosqualene to (17Z)-protosta-17(20),24-dien-3-beta-ol (protostadienol) (PubMed:19216560, PubMed:19415934, PubMed:29158519). The synthesis of protostadienol is followed by several steps of monooxygenation, dehydrogenation, and acyl transfer to yield the final helvolic acid (PubMed:19216560). Following the cyclization to the tetracyclic protostadienol by helA, cytochrome P450 monooxygenases helB1-mediated and helB2-mediated oxidation at C-4 and C-16, acyltransferase helD2-dependent acetylation of 16-OH, oxidation of C-21 by cytochrome P450 monooxygenase helB4, and short chain dehydrogenase helC-dependent oxidative decarboxylation yield the fusidane skeleton (PubMed:29158519). This intermediate is further modified in three additional steps mediated by the cytochrome P450 monooxygenase helB3, the acyltransferase helD1, and the 3-ketosteroid 1-dehydrogenase helE to give helvolic acid (PubMed:19216560, PubMed:19415934, PubMed:29158519). Compared with the late stages in the biosynthesis of helvolic acid, enzymes involved in the early stage modifications act in a relatively strict order (PubMed:29158519). The hydroxylation of C-16 by helB1 and subsequent acetylation by helD2 should occur before the helB3-mediated oxidation of C-21 (PubMed:29158519). C-4 demethylation in fusidane-type antibiotics proceeds in an unusual manner though it is also achieved by oxidative decarboxylation (PubMed:19415934, PubMed:29158519). The methyl group at C-4 beta position is oxidized by helB1 and subsequently removed by the short chain dehydrogenase helC (PubMed:19415934, PubMed:29158519).</text>
</comment>
<comment type="cofactor">
    <cofactor evidence="1">
        <name>heme</name>
        <dbReference type="ChEBI" id="CHEBI:30413"/>
    </cofactor>
</comment>
<comment type="pathway">
    <text evidence="7 10">Mycotoxin biosynthesis.</text>
</comment>
<comment type="induction">
    <text evidence="4">Expression is under the control of the secondary metabolism regulator laeA (PubMed:17432932).</text>
</comment>
<comment type="similarity">
    <text>Belongs to the cytochrome P450 family.</text>
</comment>
<organism>
    <name type="scientific">Aspergillus fumigatus (strain ATCC MYA-4609 / CBS 101355 / FGSC A1100 / Af293)</name>
    <name type="common">Neosartorya fumigata</name>
    <dbReference type="NCBI Taxonomy" id="330879"/>
    <lineage>
        <taxon>Eukaryota</taxon>
        <taxon>Fungi</taxon>
        <taxon>Dikarya</taxon>
        <taxon>Ascomycota</taxon>
        <taxon>Pezizomycotina</taxon>
        <taxon>Eurotiomycetes</taxon>
        <taxon>Eurotiomycetidae</taxon>
        <taxon>Eurotiales</taxon>
        <taxon>Aspergillaceae</taxon>
        <taxon>Aspergillus</taxon>
        <taxon>Aspergillus subgen. Fumigati</taxon>
    </lineage>
</organism>
<feature type="signal peptide" evidence="2">
    <location>
        <begin position="1"/>
        <end position="25"/>
    </location>
</feature>
<feature type="chain" id="PRO_0000441950" description="Cytochrome P450 monooxygenase helB3" evidence="2">
    <location>
        <begin position="26"/>
        <end position="507"/>
    </location>
</feature>
<feature type="binding site" description="axial binding residue" evidence="1">
    <location>
        <position position="435"/>
    </location>
    <ligand>
        <name>heme</name>
        <dbReference type="ChEBI" id="CHEBI:30413"/>
    </ligand>
    <ligandPart>
        <name>Fe</name>
        <dbReference type="ChEBI" id="CHEBI:18248"/>
    </ligandPart>
</feature>
<feature type="glycosylation site" description="N-linked (GlcNAc...) asparagine" evidence="3">
    <location>
        <position position="111"/>
    </location>
</feature>
<feature type="glycosylation site" description="N-linked (GlcNAc...) asparagine" evidence="3">
    <location>
        <position position="206"/>
    </location>
</feature>
<feature type="glycosylation site" description="N-linked (GlcNAc...) asparagine" evidence="3">
    <location>
        <position position="339"/>
    </location>
</feature>
<keyword id="KW-0325">Glycoprotein</keyword>
<keyword id="KW-0408">Iron</keyword>
<keyword id="KW-0479">Metal-binding</keyword>
<keyword id="KW-0503">Monooxygenase</keyword>
<keyword id="KW-0560">Oxidoreductase</keyword>
<keyword id="KW-1185">Reference proteome</keyword>
<keyword id="KW-0732">Signal</keyword>
<sequence length="507" mass="57678">MAVATLISILFAVLALRLCYLLIHALFLSPLRHIPAPFMARVTSKRPLWHLLTGKAEIAARQDYSTFGDIYLCKPNTVYLCDPHDACTVLSSHAFRKTDMYRVFEYEGIPNVSTFTDPAQAQRRRRQLHPFFNNAYLTQMEPVMLKYGIQALKARWDAQLARHKKVEVNYRFDTQLAMFDITGALVFGREFHALETSNLVYTKWVNNTLSYMLVSHYFPWVKRVPLSWLVRGLKQSYDDLVAFSQESIAIRQADLQAGRPKPADLLQALLDAEDPDSKAPMTAREVQAESIAMLVGGSESTSSVISWVIHFLLLYPEHLQAVVAETRANFPADHTITFNESKANLPYLEACIYETLRCIPTASTSFPRVSDQAIILKGYYIPAGTEIATNKCAAHLHQPSWQDPDRFYPPRFLNQETYHETRRNMLSFAYGTRFCIGRNLAWAVMMVTLANLFKDYEVELPEDSRFGPTIVDAAGRPKIMPTKMGVATMPADPERDCRMVLSVRITE</sequence>